<gene>
    <name type="primary">pam-b</name>
</gene>
<organism>
    <name type="scientific">Xenopus laevis</name>
    <name type="common">African clawed frog</name>
    <dbReference type="NCBI Taxonomy" id="8355"/>
    <lineage>
        <taxon>Eukaryota</taxon>
        <taxon>Metazoa</taxon>
        <taxon>Chordata</taxon>
        <taxon>Craniata</taxon>
        <taxon>Vertebrata</taxon>
        <taxon>Euteleostomi</taxon>
        <taxon>Amphibia</taxon>
        <taxon>Batrachia</taxon>
        <taxon>Anura</taxon>
        <taxon>Pipoidea</taxon>
        <taxon>Pipidae</taxon>
        <taxon>Xenopodinae</taxon>
        <taxon>Xenopus</taxon>
        <taxon>Xenopus</taxon>
    </lineage>
</organism>
<name>AMDB_XENLA</name>
<reference key="1">
    <citation type="journal article" date="1988" name="Biochem. Biophys. Res. Commun.">
        <title>Cloning of cDNA encoding a new peptide C-terminal alpha-amidating enzyme having a putative membrane-spanning domain from Xenopus laevis skin.</title>
        <authorList>
            <person name="Ohsuye K."/>
            <person name="Kitano K."/>
            <person name="Wada Y."/>
            <person name="Fuchimura K."/>
            <person name="Tanaka S."/>
            <person name="Mizuno K."/>
            <person name="Matsuo H."/>
        </authorList>
    </citation>
    <scope>NUCLEOTIDE SEQUENCE [MRNA]</scope>
    <source>
        <tissue>Skin</tissue>
    </source>
</reference>
<feature type="signal peptide" evidence="4">
    <location>
        <begin position="1"/>
        <end position="39"/>
    </location>
</feature>
<feature type="chain" id="PRO_0000006368" description="Peptidyl-glycine alpha-amidating monooxygenase B">
    <location>
        <begin position="40"/>
        <end position="875"/>
    </location>
</feature>
<feature type="topological domain" description="Intragranular" evidence="4">
    <location>
        <begin position="40"/>
        <end position="763"/>
    </location>
</feature>
<feature type="transmembrane region" description="Helical" evidence="4">
    <location>
        <begin position="764"/>
        <end position="787"/>
    </location>
</feature>
<feature type="topological domain" description="Cytoplasmic" evidence="4">
    <location>
        <begin position="788"/>
        <end position="875"/>
    </location>
</feature>
<feature type="repeat" description="NHL 1">
    <location>
        <begin position="467"/>
        <end position="508"/>
    </location>
</feature>
<feature type="repeat" description="NHL 2">
    <location>
        <begin position="516"/>
        <end position="561"/>
    </location>
</feature>
<feature type="repeat" description="NHL 3">
    <location>
        <begin position="569"/>
        <end position="613"/>
    </location>
</feature>
<feature type="repeat" description="NHL 4">
    <location>
        <begin position="666"/>
        <end position="709"/>
    </location>
</feature>
<feature type="region of interest" description="Peptidylglycine alpha-hydroxylating monooxygenase" evidence="2">
    <location>
        <begin position="3"/>
        <end position="394"/>
    </location>
</feature>
<feature type="region of interest" description="Peptidyl-alpha-hydroxyglycine alpha-amidating lyase" evidence="2">
    <location>
        <begin position="395"/>
        <end position="716"/>
    </location>
</feature>
<feature type="region of interest" description="Disordered" evidence="5">
    <location>
        <begin position="735"/>
        <end position="755"/>
    </location>
</feature>
<feature type="region of interest" description="Disordered" evidence="5">
    <location>
        <begin position="837"/>
        <end position="875"/>
    </location>
</feature>
<feature type="compositionally biased region" description="Polar residues" evidence="5">
    <location>
        <begin position="743"/>
        <end position="755"/>
    </location>
</feature>
<feature type="compositionally biased region" description="Acidic residues" evidence="5">
    <location>
        <begin position="850"/>
        <end position="864"/>
    </location>
</feature>
<feature type="binding site" evidence="2">
    <location>
        <position position="105"/>
    </location>
    <ligand>
        <name>Cu(2+)</name>
        <dbReference type="ChEBI" id="CHEBI:29036"/>
        <label>A</label>
    </ligand>
</feature>
<feature type="binding site" evidence="2">
    <location>
        <position position="106"/>
    </location>
    <ligand>
        <name>Cu(2+)</name>
        <dbReference type="ChEBI" id="CHEBI:29036"/>
        <label>A</label>
    </ligand>
</feature>
<feature type="binding site" evidence="2">
    <location>
        <position position="170"/>
    </location>
    <ligand>
        <name>Cu(2+)</name>
        <dbReference type="ChEBI" id="CHEBI:29036"/>
        <label>A</label>
    </ligand>
</feature>
<feature type="binding site" evidence="2">
    <location>
        <position position="240"/>
    </location>
    <ligand>
        <name>Cu(2+)</name>
        <dbReference type="ChEBI" id="CHEBI:29036"/>
        <label>B</label>
    </ligand>
</feature>
<feature type="binding site" evidence="2">
    <location>
        <position position="242"/>
    </location>
    <ligand>
        <name>Cu(2+)</name>
        <dbReference type="ChEBI" id="CHEBI:29036"/>
        <label>B</label>
    </ligand>
</feature>
<feature type="binding site" evidence="2">
    <location>
        <position position="312"/>
    </location>
    <ligand>
        <name>Cu(2+)</name>
        <dbReference type="ChEBI" id="CHEBI:29036"/>
        <label>B</label>
    </ligand>
</feature>
<feature type="binding site" evidence="2">
    <location>
        <position position="430"/>
    </location>
    <ligand>
        <name>a protein</name>
        <dbReference type="ChEBI" id="CHEBI:16541"/>
    </ligand>
    <ligandPart>
        <name>C-terminal Xaa-(2S)-2-hydroxyglycine residue</name>
        <dbReference type="ChEBI" id="CHEBI:142768"/>
    </ligandPart>
</feature>
<feature type="binding site" evidence="2">
    <location>
        <position position="550"/>
    </location>
    <ligand>
        <name>a protein</name>
        <dbReference type="ChEBI" id="CHEBI:16541"/>
    </ligand>
    <ligandPart>
        <name>C-terminal Xaa-(2S)-2-hydroxyglycine residue</name>
        <dbReference type="ChEBI" id="CHEBI:142768"/>
    </ligandPart>
</feature>
<feature type="binding site" evidence="2">
    <location>
        <position position="602"/>
    </location>
    <ligand>
        <name>a protein</name>
        <dbReference type="ChEBI" id="CHEBI:16541"/>
    </ligand>
    <ligandPart>
        <name>C-terminal Xaa-(2S)-2-hydroxyglycine residue</name>
        <dbReference type="ChEBI" id="CHEBI:142768"/>
    </ligandPart>
</feature>
<feature type="glycosylation site" description="N-linked (GlcNAc...) asparagine" evidence="4">
    <location>
        <position position="465"/>
    </location>
</feature>
<feature type="glycosylation site" description="N-linked (GlcNAc...) asparagine" evidence="4">
    <location>
        <position position="662"/>
    </location>
</feature>
<feature type="glycosylation site" description="N-linked (GlcNAc...) asparagine" evidence="4">
    <location>
        <position position="743"/>
    </location>
</feature>
<feature type="disulfide bond" evidence="2">
    <location>
        <begin position="45"/>
        <end position="184"/>
    </location>
</feature>
<feature type="disulfide bond" evidence="2">
    <location>
        <begin position="79"/>
        <end position="124"/>
    </location>
</feature>
<feature type="disulfide bond" evidence="2">
    <location>
        <begin position="112"/>
        <end position="129"/>
    </location>
</feature>
<feature type="disulfide bond" evidence="2">
    <location>
        <begin position="225"/>
        <end position="332"/>
    </location>
</feature>
<feature type="disulfide bond" evidence="2">
    <location>
        <begin position="291"/>
        <end position="313"/>
    </location>
</feature>
<feature type="disulfide bond" evidence="2">
    <location>
        <begin position="530"/>
        <end position="551"/>
    </location>
</feature>
<feature type="disulfide bond" evidence="2">
    <location>
        <begin position="598"/>
        <end position="609"/>
    </location>
</feature>
<sequence>MDMASLISSLLVLFLIFQNSCYCFRSPLSVFKRYEESTRSLSNDCLGTTRPVMSPGSSDYTLDIRMPGVTPTESDTYLCKSYRLPVDDEAYVVDYRPHANMDTAHHMLLFGCNVPSSTDDYWDCSAGTCNDKSSIMYAWAKNAPPTKLPEGVGFQVGGKSGSRYFVLQVHYGDVKAFQDKHKDCTGVTVRITPEKQPLIAGIYLSMSLNTVVPPGQEVVNSDIACLYNRPTIHPFAYRVHTHQLGQVVSGFRVRHGKWTLIGRQSPQLPQAFYPVEHPLEISPGDIIATRCLFTGKGRMSATYIGGTAKDEMCNLYIMYYMDAAHATSYMTCVQTGNPKLFENIPEIANVPIPVSPDMMMMMMMGHGHHHTEAEAETNTALQQPKREEEEVLNQDVHLEEDTDWPGVNLKVGQVSGLALDPKNNLVIFHRGDHVWDENSFDRNFVYQQRGIGPIQESTILVVDPNTSKVLKSTGQNLFFLPHGLTIDRDGNYWVTDVALHQVFKVGAEKETPLLVLGRAFQPGSDRKHFCQPTDVAVDPITGNFFVADGYCNSRIMQFSPNGMFIMQWGEETSSNLPRPGQFRIPHSLTMISDQGQLCVADRENGRIQCFHAKTGEFVKQIKHQEFGREVFAVSYAPGGVLYAVNGKPYYGDSTPVQGFMLNFSNGDILDTFIPARKNFEMPHDIAAGDDGTVYVGDAHANAVWKFSPSKAEHRSVKKAGIEVEEITETEIFETHMRSRPKTNESVGQQTQEKPSVVQESSAGVSFVLIITLLIIPVVVLIAIAIFIRWRKVRMYGGDIGHKSESSSGGILGKLRGKGSGGLNLGTFFATHKGYSRKGFDRLSTEGSDQEKDDDDDGSDSEEEYSAPPIPPVSSS</sequence>
<proteinExistence type="evidence at transcript level"/>
<keyword id="KW-0186">Copper</keyword>
<keyword id="KW-0968">Cytoplasmic vesicle</keyword>
<keyword id="KW-1015">Disulfide bond</keyword>
<keyword id="KW-0325">Glycoprotein</keyword>
<keyword id="KW-0456">Lyase</keyword>
<keyword id="KW-0472">Membrane</keyword>
<keyword id="KW-0479">Metal-binding</keyword>
<keyword id="KW-0503">Monooxygenase</keyword>
<keyword id="KW-0511">Multifunctional enzyme</keyword>
<keyword id="KW-0560">Oxidoreductase</keyword>
<keyword id="KW-1185">Reference proteome</keyword>
<keyword id="KW-0677">Repeat</keyword>
<keyword id="KW-0732">Signal</keyword>
<keyword id="KW-0812">Transmembrane</keyword>
<keyword id="KW-1133">Transmembrane helix</keyword>
<keyword id="KW-0862">Zinc</keyword>
<accession>P12890</accession>
<protein>
    <recommendedName>
        <fullName>Peptidyl-glycine alpha-amidating monooxygenase B</fullName>
        <shortName>PAM-B</shortName>
    </recommendedName>
    <alternativeName>
        <fullName>Peptide C-terminal alpha-amidating enzyme II</fullName>
        <shortName>AE-II</shortName>
    </alternativeName>
    <alternativeName>
        <fullName>Peptidyl-glycine alpha-amidating monooxygenase II</fullName>
    </alternativeName>
    <domain>
        <recommendedName>
            <fullName>Peptidylglycine alpha-hydroxylating monooxygenase B</fullName>
            <shortName>PHM-B</shortName>
            <ecNumber evidence="2">1.14.17.3</ecNumber>
        </recommendedName>
    </domain>
    <domain>
        <recommendedName>
            <fullName>Peptidyl-alpha-hydroxyglycine alpha-amidating lyase B</fullName>
            <ecNumber>4.3.2.5</ecNumber>
        </recommendedName>
        <alternativeName>
            <fullName>Peptidylamidoglycolate lyase-B</fullName>
            <shortName evidence="2">PAL-B</shortName>
        </alternativeName>
    </domain>
</protein>
<evidence type="ECO:0000250" key="1">
    <source>
        <dbReference type="UniProtKB" id="P10731"/>
    </source>
</evidence>
<evidence type="ECO:0000250" key="2">
    <source>
        <dbReference type="UniProtKB" id="P14925"/>
    </source>
</evidence>
<evidence type="ECO:0000250" key="3">
    <source>
        <dbReference type="UniProtKB" id="P19021"/>
    </source>
</evidence>
<evidence type="ECO:0000255" key="4"/>
<evidence type="ECO:0000256" key="5">
    <source>
        <dbReference type="SAM" id="MobiDB-lite"/>
    </source>
</evidence>
<evidence type="ECO:0000305" key="6"/>
<comment type="function">
    <text evidence="2 3">Bifunctional enzyme that catalyzes amidation of the C-terminus of proteins (By similarity). Alpha-amidation is present at the C-terminus of many endocrine hormones and neuropeptides and is required for their activity (By similarity). C-terminal amidation also takes place in response to protein fragmentation triggered by oxidative stress, promoting degradation of amidated protein fragments by the proteasome (By similarity). Alpha-amidation involves two sequential reactions, both of which are catalyzed by separate catalytic domains of the enzyme (By similarity). The first step, catalyzed by peptidyl alpha-hydroxylating monooxygenase (PHM) domain, is the copper-, ascorbate-, and O2- dependent stereospecific hydroxylation (with S stereochemistry) at the alpha-carbon (C-alpha) of the C-terminal glycine of the peptidylglycine substrate (By similarity). The second step, catalyzed by the peptidylglycine amidoglycolate lyase (PAL) domain, is the zinc-dependent cleavage of the N-C-alpha bond, producing the alpha-amidated peptide and glyoxylate (By similarity).</text>
</comment>
<comment type="catalytic activity">
    <reaction evidence="2">
        <text>a [peptide]-C-terminal glycine + 2 L-ascorbate + O2 = a [peptide]-C-terminal (2S)-2-hydroxyglycine + 2 monodehydro-L-ascorbate radical + H2O</text>
        <dbReference type="Rhea" id="RHEA:21452"/>
        <dbReference type="Rhea" id="RHEA-COMP:13486"/>
        <dbReference type="Rhea" id="RHEA-COMP:15321"/>
        <dbReference type="ChEBI" id="CHEBI:15377"/>
        <dbReference type="ChEBI" id="CHEBI:15379"/>
        <dbReference type="ChEBI" id="CHEBI:38290"/>
        <dbReference type="ChEBI" id="CHEBI:59513"/>
        <dbReference type="ChEBI" id="CHEBI:137000"/>
        <dbReference type="ChEBI" id="CHEBI:142768"/>
        <dbReference type="EC" id="1.14.17.3"/>
    </reaction>
</comment>
<comment type="catalytic activity">
    <reaction evidence="2">
        <text>a [peptide]-C-terminal (2S)-2-hydroxyglycine = a [peptide]-C-terminal amide + glyoxylate</text>
        <dbReference type="Rhea" id="RHEA:20924"/>
        <dbReference type="Rhea" id="RHEA-COMP:13485"/>
        <dbReference type="Rhea" id="RHEA-COMP:15321"/>
        <dbReference type="ChEBI" id="CHEBI:36655"/>
        <dbReference type="ChEBI" id="CHEBI:137001"/>
        <dbReference type="ChEBI" id="CHEBI:142768"/>
        <dbReference type="EC" id="4.3.2.5"/>
    </reaction>
</comment>
<comment type="cofactor">
    <cofactor evidence="2">
        <name>Zn(2+)</name>
        <dbReference type="ChEBI" id="CHEBI:29105"/>
    </cofactor>
    <text evidence="2">Binds one Zn(2+) ion per subunit.</text>
</comment>
<comment type="cofactor">
    <cofactor evidence="2">
        <name>Cu(2+)</name>
        <dbReference type="ChEBI" id="CHEBI:29036"/>
    </cofactor>
    <text evidence="2">Binds 2 Cu(2+) ions per subunit.</text>
</comment>
<comment type="subunit">
    <text evidence="2">Monomer.</text>
</comment>
<comment type="subcellular location">
    <subcellularLocation>
        <location evidence="1">Cytoplasmic vesicle</location>
        <location evidence="1">Secretory vesicle membrane</location>
        <topology evidence="1">Single-pass membrane protein</topology>
    </subcellularLocation>
    <text evidence="1">Secretory granules.</text>
</comment>
<comment type="similarity">
    <text evidence="6">In the C-terminal section; belongs to the peptidyl-alpha-hydroxyglycine alpha-amidating lyase family.</text>
</comment>
<comment type="similarity">
    <text evidence="6">In the N-terminal section; belongs to the copper type II ascorbate-dependent monooxygenase family.</text>
</comment>
<dbReference type="EC" id="1.14.17.3" evidence="2"/>
<dbReference type="EC" id="4.3.2.5"/>
<dbReference type="EMBL" id="M19032">
    <property type="protein sequence ID" value="AAA49667.1"/>
    <property type="molecule type" value="mRNA"/>
</dbReference>
<dbReference type="PIR" id="A27715">
    <property type="entry name" value="URXLA2"/>
</dbReference>
<dbReference type="RefSeq" id="NP_001081254.1">
    <property type="nucleotide sequence ID" value="NM_001087785.1"/>
</dbReference>
<dbReference type="SMR" id="P12890"/>
<dbReference type="GlyCosmos" id="P12890">
    <property type="glycosylation" value="3 sites, No reported glycans"/>
</dbReference>
<dbReference type="GeneID" id="397736"/>
<dbReference type="KEGG" id="xla:397736"/>
<dbReference type="AGR" id="Xenbase:XB-GENE-6252615"/>
<dbReference type="CTD" id="397736"/>
<dbReference type="Xenbase" id="XB-GENE-6252615">
    <property type="gene designation" value="pam.S"/>
</dbReference>
<dbReference type="OrthoDB" id="10018185at2759"/>
<dbReference type="Proteomes" id="UP000186698">
    <property type="component" value="Chromosome 1S"/>
</dbReference>
<dbReference type="Bgee" id="397736">
    <property type="expression patterns" value="Expressed in heart and 19 other cell types or tissues"/>
</dbReference>
<dbReference type="GO" id="GO:0005576">
    <property type="term" value="C:extracellular region"/>
    <property type="evidence" value="ECO:0000318"/>
    <property type="project" value="GO_Central"/>
</dbReference>
<dbReference type="GO" id="GO:0030658">
    <property type="term" value="C:transport vesicle membrane"/>
    <property type="evidence" value="ECO:0007669"/>
    <property type="project" value="UniProtKB-SubCell"/>
</dbReference>
<dbReference type="GO" id="GO:0005507">
    <property type="term" value="F:copper ion binding"/>
    <property type="evidence" value="ECO:0007669"/>
    <property type="project" value="InterPro"/>
</dbReference>
<dbReference type="GO" id="GO:0004598">
    <property type="term" value="F:peptidylamidoglycolate lyase activity"/>
    <property type="evidence" value="ECO:0007669"/>
    <property type="project" value="UniProtKB-EC"/>
</dbReference>
<dbReference type="GO" id="GO:0004504">
    <property type="term" value="F:peptidylglycine monooxygenase activity"/>
    <property type="evidence" value="ECO:0000318"/>
    <property type="project" value="GO_Central"/>
</dbReference>
<dbReference type="GO" id="GO:0006518">
    <property type="term" value="P:peptide metabolic process"/>
    <property type="evidence" value="ECO:0007669"/>
    <property type="project" value="InterPro"/>
</dbReference>
<dbReference type="CDD" id="cd14958">
    <property type="entry name" value="NHL_PAL_like"/>
    <property type="match status" value="1"/>
</dbReference>
<dbReference type="FunFam" id="2.60.120.230:FF:000002">
    <property type="entry name" value="Peptidyl-glycine alpha-amidating monooxygenase B"/>
    <property type="match status" value="1"/>
</dbReference>
<dbReference type="FunFam" id="2.120.10.30:FF:000016">
    <property type="entry name" value="peptidyl-glycine alpha-amidating monooxygenase isoform X1"/>
    <property type="match status" value="1"/>
</dbReference>
<dbReference type="FunFam" id="2.60.120.310:FF:000001">
    <property type="entry name" value="peptidyl-glycine alpha-amidating monooxygenase isoform X1"/>
    <property type="match status" value="1"/>
</dbReference>
<dbReference type="Gene3D" id="2.60.120.230">
    <property type="match status" value="1"/>
</dbReference>
<dbReference type="Gene3D" id="2.60.120.310">
    <property type="entry name" value="Copper type II, ascorbate-dependent monooxygenase, N-terminal domain"/>
    <property type="match status" value="1"/>
</dbReference>
<dbReference type="Gene3D" id="2.120.10.30">
    <property type="entry name" value="TolB, C-terminal domain"/>
    <property type="match status" value="1"/>
</dbReference>
<dbReference type="InterPro" id="IPR011042">
    <property type="entry name" value="6-blade_b-propeller_TolB-like"/>
</dbReference>
<dbReference type="InterPro" id="IPR014784">
    <property type="entry name" value="Cu2_ascorb_mOase-like_C"/>
</dbReference>
<dbReference type="InterPro" id="IPR020611">
    <property type="entry name" value="Cu2_ascorb_mOase_CS-1"/>
</dbReference>
<dbReference type="InterPro" id="IPR014783">
    <property type="entry name" value="Cu2_ascorb_mOase_CS-2"/>
</dbReference>
<dbReference type="InterPro" id="IPR000323">
    <property type="entry name" value="Cu2_ascorb_mOase_N"/>
</dbReference>
<dbReference type="InterPro" id="IPR036939">
    <property type="entry name" value="Cu2_ascorb_mOase_N_sf"/>
</dbReference>
<dbReference type="InterPro" id="IPR024548">
    <property type="entry name" value="Cu2_monoox_C"/>
</dbReference>
<dbReference type="InterPro" id="IPR001258">
    <property type="entry name" value="NHL_repeat"/>
</dbReference>
<dbReference type="InterPro" id="IPR000720">
    <property type="entry name" value="PHM/PAL"/>
</dbReference>
<dbReference type="InterPro" id="IPR008977">
    <property type="entry name" value="PHM/PNGase_F_dom_sf"/>
</dbReference>
<dbReference type="PANTHER" id="PTHR10680">
    <property type="entry name" value="PEPTIDYL-GLYCINE ALPHA-AMIDATING MONOOXYGENASE"/>
    <property type="match status" value="1"/>
</dbReference>
<dbReference type="PANTHER" id="PTHR10680:SF14">
    <property type="entry name" value="PEPTIDYL-GLYCINE ALPHA-AMIDATING MONOOXYGENASE"/>
    <property type="match status" value="1"/>
</dbReference>
<dbReference type="Pfam" id="PF03712">
    <property type="entry name" value="Cu2_monoox_C"/>
    <property type="match status" value="1"/>
</dbReference>
<dbReference type="Pfam" id="PF01082">
    <property type="entry name" value="Cu2_monooxygen"/>
    <property type="match status" value="1"/>
</dbReference>
<dbReference type="Pfam" id="PF01436">
    <property type="entry name" value="NHL"/>
    <property type="match status" value="3"/>
</dbReference>
<dbReference type="PRINTS" id="PR00790">
    <property type="entry name" value="PAMONOXGNASE"/>
</dbReference>
<dbReference type="SUPFAM" id="SSF101898">
    <property type="entry name" value="NHL repeat"/>
    <property type="match status" value="1"/>
</dbReference>
<dbReference type="SUPFAM" id="SSF49742">
    <property type="entry name" value="PHM/PNGase F"/>
    <property type="match status" value="2"/>
</dbReference>
<dbReference type="PROSITE" id="PS00084">
    <property type="entry name" value="CU2_MONOOXYGENASE_1"/>
    <property type="match status" value="1"/>
</dbReference>
<dbReference type="PROSITE" id="PS00085">
    <property type="entry name" value="CU2_MONOOXYGENASE_2"/>
    <property type="match status" value="1"/>
</dbReference>
<dbReference type="PROSITE" id="PS51125">
    <property type="entry name" value="NHL"/>
    <property type="match status" value="4"/>
</dbReference>